<gene>
    <name evidence="1" type="primary">tolB</name>
    <name type="ordered locus">OTBS_0018</name>
</gene>
<evidence type="ECO:0000255" key="1">
    <source>
        <dbReference type="HAMAP-Rule" id="MF_00671"/>
    </source>
</evidence>
<proteinExistence type="inferred from homology"/>
<reference key="1">
    <citation type="journal article" date="2007" name="Proc. Natl. Acad. Sci. U.S.A.">
        <title>The Orientia tsutsugamushi genome reveals massive proliferation of conjugative type IV secretion system and host-cell interaction genes.</title>
        <authorList>
            <person name="Cho N.-H."/>
            <person name="Kim H.-R."/>
            <person name="Lee J.-H."/>
            <person name="Kim S.-Y."/>
            <person name="Kim J."/>
            <person name="Cha S."/>
            <person name="Kim S.-Y."/>
            <person name="Darby A.C."/>
            <person name="Fuxelius H.-H."/>
            <person name="Yin J."/>
            <person name="Kim J.H."/>
            <person name="Kim J."/>
            <person name="Lee S.J."/>
            <person name="Koh Y.-S."/>
            <person name="Jang W.-J."/>
            <person name="Park K.-H."/>
            <person name="Andersson S.G.E."/>
            <person name="Choi M.-S."/>
            <person name="Kim I.-S."/>
        </authorList>
    </citation>
    <scope>NUCLEOTIDE SEQUENCE [LARGE SCALE GENOMIC DNA]</scope>
    <source>
        <strain>Boryong</strain>
    </source>
</reference>
<protein>
    <recommendedName>
        <fullName evidence="1">Tol-Pal system protein TolB</fullName>
    </recommendedName>
</protein>
<name>TOLB_ORITB</name>
<organism>
    <name type="scientific">Orientia tsutsugamushi (strain Boryong)</name>
    <name type="common">Rickettsia tsutsugamushi</name>
    <dbReference type="NCBI Taxonomy" id="357244"/>
    <lineage>
        <taxon>Bacteria</taxon>
        <taxon>Pseudomonadati</taxon>
        <taxon>Pseudomonadota</taxon>
        <taxon>Alphaproteobacteria</taxon>
        <taxon>Rickettsiales</taxon>
        <taxon>Rickettsiaceae</taxon>
        <taxon>Rickettsieae</taxon>
        <taxon>Orientia</taxon>
    </lineage>
</organism>
<feature type="signal peptide" evidence="1">
    <location>
        <begin position="1"/>
        <end position="31"/>
    </location>
</feature>
<feature type="chain" id="PRO_1000131532" description="Tol-Pal system protein TolB">
    <location>
        <begin position="32"/>
        <end position="453"/>
    </location>
</feature>
<keyword id="KW-0131">Cell cycle</keyword>
<keyword id="KW-0132">Cell division</keyword>
<keyword id="KW-0574">Periplasm</keyword>
<keyword id="KW-1185">Reference proteome</keyword>
<keyword id="KW-0732">Signal</keyword>
<sequence length="453" mass="50377">MINNLSVSMTKVLKIILTIIIILFNTLSILANTTTLSSIKITKGNCTQIPIAINFFSAKSNEEHDLSQNIVSIISNDLNISKIFAPISSDLFIETEQGVAHIPLFTAWSQINANILINGEITKIDSTDFKVTFVIWDVFSAKEITRKSFTFPSQLWRSTAHKIADQIYKHVTGSKGNFNTKIVYVSESNSSNRKIRRIAIMDQDGANHNYITNGKNHVITPVFSPKNNQILYVSYHNKIPTVRIHDLNSGNNKILASFNGITFSPRFSPDGNKILVSNSSTKNVTHIYEINLLTGKIKQLTKGQSINTSPSYSPDGSKIAFVSDRSGSTQIYIMNDQGGNIKRLTSQPGAYTTPAWSPTNNYIAFTKIEAGEFSIGVIKLDGSNKRIIATKYLVEGPSWAPDGKTIIFSRAYKATKSTSTKVKLYSVDYTGYNEREIQTPENASDPNWSNEYE</sequence>
<accession>A5CBX4</accession>
<dbReference type="EMBL" id="AM494475">
    <property type="protein sequence ID" value="CAM79084.1"/>
    <property type="molecule type" value="Genomic_DNA"/>
</dbReference>
<dbReference type="RefSeq" id="WP_011944239.1">
    <property type="nucleotide sequence ID" value="NC_009488.1"/>
</dbReference>
<dbReference type="SMR" id="A5CBX4"/>
<dbReference type="KEGG" id="ots:OTBS_0018"/>
<dbReference type="eggNOG" id="COG0823">
    <property type="taxonomic scope" value="Bacteria"/>
</dbReference>
<dbReference type="HOGENOM" id="CLU_047123_0_0_5"/>
<dbReference type="Proteomes" id="UP000001565">
    <property type="component" value="Chromosome"/>
</dbReference>
<dbReference type="GO" id="GO:0042597">
    <property type="term" value="C:periplasmic space"/>
    <property type="evidence" value="ECO:0007669"/>
    <property type="project" value="UniProtKB-SubCell"/>
</dbReference>
<dbReference type="GO" id="GO:0051301">
    <property type="term" value="P:cell division"/>
    <property type="evidence" value="ECO:0007669"/>
    <property type="project" value="UniProtKB-UniRule"/>
</dbReference>
<dbReference type="GO" id="GO:0017038">
    <property type="term" value="P:protein import"/>
    <property type="evidence" value="ECO:0007669"/>
    <property type="project" value="InterPro"/>
</dbReference>
<dbReference type="Gene3D" id="2.120.10.30">
    <property type="entry name" value="TolB, C-terminal domain"/>
    <property type="match status" value="1"/>
</dbReference>
<dbReference type="Gene3D" id="3.40.50.10070">
    <property type="entry name" value="TolB, N-terminal domain"/>
    <property type="match status" value="1"/>
</dbReference>
<dbReference type="HAMAP" id="MF_00671">
    <property type="entry name" value="TolB"/>
    <property type="match status" value="1"/>
</dbReference>
<dbReference type="InterPro" id="IPR011042">
    <property type="entry name" value="6-blade_b-propeller_TolB-like"/>
</dbReference>
<dbReference type="InterPro" id="IPR011659">
    <property type="entry name" value="PD40"/>
</dbReference>
<dbReference type="InterPro" id="IPR014167">
    <property type="entry name" value="Tol-Pal_TolB"/>
</dbReference>
<dbReference type="InterPro" id="IPR007195">
    <property type="entry name" value="TolB_N"/>
</dbReference>
<dbReference type="NCBIfam" id="TIGR02800">
    <property type="entry name" value="propeller_TolB"/>
    <property type="match status" value="1"/>
</dbReference>
<dbReference type="PANTHER" id="PTHR36842:SF1">
    <property type="entry name" value="PROTEIN TOLB"/>
    <property type="match status" value="1"/>
</dbReference>
<dbReference type="PANTHER" id="PTHR36842">
    <property type="entry name" value="PROTEIN TOLB HOMOLOG"/>
    <property type="match status" value="1"/>
</dbReference>
<dbReference type="Pfam" id="PF07676">
    <property type="entry name" value="PD40"/>
    <property type="match status" value="5"/>
</dbReference>
<dbReference type="Pfam" id="PF04052">
    <property type="entry name" value="TolB_N"/>
    <property type="match status" value="1"/>
</dbReference>
<dbReference type="SUPFAM" id="SSF52964">
    <property type="entry name" value="TolB, N-terminal domain"/>
    <property type="match status" value="1"/>
</dbReference>
<dbReference type="SUPFAM" id="SSF69304">
    <property type="entry name" value="Tricorn protease N-terminal domain"/>
    <property type="match status" value="1"/>
</dbReference>
<comment type="function">
    <text evidence="1">Part of the Tol-Pal system, which plays a role in outer membrane invagination during cell division and is important for maintaining outer membrane integrity.</text>
</comment>
<comment type="subunit">
    <text evidence="1">The Tol-Pal system is composed of five core proteins: the inner membrane proteins TolA, TolQ and TolR, the periplasmic protein TolB and the outer membrane protein Pal. They form a network linking the inner and outer membranes and the peptidoglycan layer.</text>
</comment>
<comment type="subcellular location">
    <subcellularLocation>
        <location evidence="1">Periplasm</location>
    </subcellularLocation>
</comment>
<comment type="similarity">
    <text evidence="1">Belongs to the TolB family.</text>
</comment>